<evidence type="ECO:0000255" key="1">
    <source>
        <dbReference type="HAMAP-Rule" id="MF_01338"/>
    </source>
</evidence>
<geneLocation type="chloroplast"/>
<feature type="propeptide" id="PRO_0000031425" evidence="1">
    <location>
        <begin position="1"/>
        <end position="2"/>
    </location>
</feature>
<feature type="chain" id="PRO_0000031426" description="Ribulose bisphosphate carboxylase large chain">
    <location>
        <begin position="3"/>
        <end position="477"/>
    </location>
</feature>
<feature type="active site" description="Proton acceptor" evidence="1">
    <location>
        <position position="175"/>
    </location>
</feature>
<feature type="active site" description="Proton acceptor" evidence="1">
    <location>
        <position position="294"/>
    </location>
</feature>
<feature type="binding site" description="in homodimeric partner" evidence="1">
    <location>
        <position position="123"/>
    </location>
    <ligand>
        <name>substrate</name>
    </ligand>
</feature>
<feature type="binding site" evidence="1">
    <location>
        <position position="173"/>
    </location>
    <ligand>
        <name>substrate</name>
    </ligand>
</feature>
<feature type="binding site" evidence="1">
    <location>
        <position position="177"/>
    </location>
    <ligand>
        <name>substrate</name>
    </ligand>
</feature>
<feature type="binding site" description="via carbamate group" evidence="1">
    <location>
        <position position="201"/>
    </location>
    <ligand>
        <name>Mg(2+)</name>
        <dbReference type="ChEBI" id="CHEBI:18420"/>
    </ligand>
</feature>
<feature type="binding site" evidence="1">
    <location>
        <position position="203"/>
    </location>
    <ligand>
        <name>Mg(2+)</name>
        <dbReference type="ChEBI" id="CHEBI:18420"/>
    </ligand>
</feature>
<feature type="binding site" evidence="1">
    <location>
        <position position="204"/>
    </location>
    <ligand>
        <name>Mg(2+)</name>
        <dbReference type="ChEBI" id="CHEBI:18420"/>
    </ligand>
</feature>
<feature type="binding site" evidence="1">
    <location>
        <position position="295"/>
    </location>
    <ligand>
        <name>substrate</name>
    </ligand>
</feature>
<feature type="binding site" evidence="1">
    <location>
        <position position="327"/>
    </location>
    <ligand>
        <name>substrate</name>
    </ligand>
</feature>
<feature type="binding site" evidence="1">
    <location>
        <position position="379"/>
    </location>
    <ligand>
        <name>substrate</name>
    </ligand>
</feature>
<feature type="site" description="Transition state stabilizer" evidence="1">
    <location>
        <position position="334"/>
    </location>
</feature>
<feature type="modified residue" description="N-acetylproline" evidence="1">
    <location>
        <position position="3"/>
    </location>
</feature>
<feature type="modified residue" description="N6,N6,N6-trimethyllysine" evidence="1">
    <location>
        <position position="14"/>
    </location>
</feature>
<feature type="modified residue" description="N6-carboxylysine" evidence="1">
    <location>
        <position position="201"/>
    </location>
</feature>
<feature type="disulfide bond" description="Interchain; in linked form" evidence="1">
    <location>
        <position position="247"/>
    </location>
</feature>
<reference key="1">
    <citation type="journal article" date="1986" name="Plant Mol. Biol.">
        <title>Nicotiana chloroplast genome: X. Correlation between the DNA sequences and the isoelectric focusing patterns of the LS of Rubisco.</title>
        <authorList>
            <person name="Lin C.M."/>
            <person name="Liu Z.Q."/>
            <person name="Kung S.D."/>
        </authorList>
        <dbReference type="AGRICOLA" id="IND86033720"/>
    </citation>
    <scope>NUCLEOTIDE SEQUENCE [GENOMIC DNA]</scope>
</reference>
<protein>
    <recommendedName>
        <fullName evidence="1">Ribulose bisphosphate carboxylase large chain</fullName>
        <shortName evidence="1">RuBisCO large subunit</shortName>
        <ecNumber evidence="1">4.1.1.39</ecNumber>
    </recommendedName>
</protein>
<accession>P11422</accession>
<gene>
    <name evidence="1" type="primary">rbcL</name>
</gene>
<sequence length="477" mass="52929">MSPQTETKASVGFKAGVKEYKLTYYTPEYQTKDTDILAAFRVTPQPGVPPEEAGAAVAAESSTGTWTTVWTDGLTSLDRYKGRCYRIERVVGEKDQYIAYVAYPLDLFEEGSVTNMFTSIVGNVFGFKALRALRLEDLRIPPAYVKTFQGPPHGIQVERDKLNKYGRPLLGCTIKPKLGLSAKNYGRAVYECLRGGLDFTKDDENVNSQPFMRWRDRFLFCAEALYKAQTETGEIKGHYLNATAGTCEEMIKRAVFARELGVPIVMHDYLTGGFTANTSLAHYCRDNGLLLHTHRAMHAVIDRQKNHGIHFRVLAKALRMSGGDHIHSGTVVGKLEGERDITLGFVDLLRDDFVEQDRSRGIYFTQDWVSLPGVLPVASGGIHVWHMPALTEIFGDDSVLQFGGGTLGHPWGNAPGAVANRLALEACVQARNEGRDLAQEGNEIIREACKWSPELAAACQVWKEIVFNFAAVDVLDK</sequence>
<proteinExistence type="inferred from homology"/>
<organism>
    <name type="scientific">Nicotiana otophora</name>
    <name type="common">Tobacco</name>
    <dbReference type="NCBI Taxonomy" id="4091"/>
    <lineage>
        <taxon>Eukaryota</taxon>
        <taxon>Viridiplantae</taxon>
        <taxon>Streptophyta</taxon>
        <taxon>Embryophyta</taxon>
        <taxon>Tracheophyta</taxon>
        <taxon>Spermatophyta</taxon>
        <taxon>Magnoliopsida</taxon>
        <taxon>eudicotyledons</taxon>
        <taxon>Gunneridae</taxon>
        <taxon>Pentapetalae</taxon>
        <taxon>asterids</taxon>
        <taxon>lamiids</taxon>
        <taxon>Solanales</taxon>
        <taxon>Solanaceae</taxon>
        <taxon>Nicotianoideae</taxon>
        <taxon>Nicotianeae</taxon>
        <taxon>Nicotiana</taxon>
    </lineage>
</organism>
<dbReference type="EC" id="4.1.1.39" evidence="1"/>
<dbReference type="EMBL" id="M16867">
    <property type="protein sequence ID" value="AAA84692.1"/>
    <property type="molecule type" value="Genomic_DNA"/>
</dbReference>
<dbReference type="PIR" id="S07402">
    <property type="entry name" value="RKNTLO"/>
</dbReference>
<dbReference type="SMR" id="P11422"/>
<dbReference type="GO" id="GO:0009507">
    <property type="term" value="C:chloroplast"/>
    <property type="evidence" value="ECO:0007669"/>
    <property type="project" value="UniProtKB-SubCell"/>
</dbReference>
<dbReference type="GO" id="GO:0000287">
    <property type="term" value="F:magnesium ion binding"/>
    <property type="evidence" value="ECO:0007669"/>
    <property type="project" value="UniProtKB-UniRule"/>
</dbReference>
<dbReference type="GO" id="GO:0004497">
    <property type="term" value="F:monooxygenase activity"/>
    <property type="evidence" value="ECO:0007669"/>
    <property type="project" value="UniProtKB-KW"/>
</dbReference>
<dbReference type="GO" id="GO:0016984">
    <property type="term" value="F:ribulose-bisphosphate carboxylase activity"/>
    <property type="evidence" value="ECO:0007669"/>
    <property type="project" value="UniProtKB-UniRule"/>
</dbReference>
<dbReference type="GO" id="GO:0009853">
    <property type="term" value="P:photorespiration"/>
    <property type="evidence" value="ECO:0007669"/>
    <property type="project" value="UniProtKB-KW"/>
</dbReference>
<dbReference type="GO" id="GO:0019253">
    <property type="term" value="P:reductive pentose-phosphate cycle"/>
    <property type="evidence" value="ECO:0007669"/>
    <property type="project" value="UniProtKB-UniRule"/>
</dbReference>
<dbReference type="CDD" id="cd08212">
    <property type="entry name" value="RuBisCO_large_I"/>
    <property type="match status" value="1"/>
</dbReference>
<dbReference type="FunFam" id="3.20.20.110:FF:000001">
    <property type="entry name" value="Ribulose bisphosphate carboxylase large chain"/>
    <property type="match status" value="1"/>
</dbReference>
<dbReference type="FunFam" id="3.30.70.150:FF:000001">
    <property type="entry name" value="Ribulose bisphosphate carboxylase large chain"/>
    <property type="match status" value="1"/>
</dbReference>
<dbReference type="Gene3D" id="3.20.20.110">
    <property type="entry name" value="Ribulose bisphosphate carboxylase, large subunit, C-terminal domain"/>
    <property type="match status" value="1"/>
</dbReference>
<dbReference type="Gene3D" id="3.30.70.150">
    <property type="entry name" value="RuBisCO large subunit, N-terminal domain"/>
    <property type="match status" value="1"/>
</dbReference>
<dbReference type="HAMAP" id="MF_01338">
    <property type="entry name" value="RuBisCO_L_type1"/>
    <property type="match status" value="1"/>
</dbReference>
<dbReference type="InterPro" id="IPR033966">
    <property type="entry name" value="RuBisCO"/>
</dbReference>
<dbReference type="InterPro" id="IPR020878">
    <property type="entry name" value="RuBisCo_large_chain_AS"/>
</dbReference>
<dbReference type="InterPro" id="IPR000685">
    <property type="entry name" value="RuBisCO_lsu_C"/>
</dbReference>
<dbReference type="InterPro" id="IPR036376">
    <property type="entry name" value="RuBisCO_lsu_C_sf"/>
</dbReference>
<dbReference type="InterPro" id="IPR017443">
    <property type="entry name" value="RuBisCO_lsu_fd_N"/>
</dbReference>
<dbReference type="InterPro" id="IPR036422">
    <property type="entry name" value="RuBisCO_lsu_N_sf"/>
</dbReference>
<dbReference type="InterPro" id="IPR020888">
    <property type="entry name" value="RuBisCO_lsuI"/>
</dbReference>
<dbReference type="NCBIfam" id="NF003252">
    <property type="entry name" value="PRK04208.1"/>
    <property type="match status" value="1"/>
</dbReference>
<dbReference type="PANTHER" id="PTHR42704">
    <property type="entry name" value="RIBULOSE BISPHOSPHATE CARBOXYLASE"/>
    <property type="match status" value="1"/>
</dbReference>
<dbReference type="PANTHER" id="PTHR42704:SF16">
    <property type="entry name" value="RIBULOSE BISPHOSPHATE CARBOXYLASE LARGE CHAIN"/>
    <property type="match status" value="1"/>
</dbReference>
<dbReference type="Pfam" id="PF00016">
    <property type="entry name" value="RuBisCO_large"/>
    <property type="match status" value="1"/>
</dbReference>
<dbReference type="Pfam" id="PF02788">
    <property type="entry name" value="RuBisCO_large_N"/>
    <property type="match status" value="1"/>
</dbReference>
<dbReference type="SFLD" id="SFLDG01052">
    <property type="entry name" value="RuBisCO"/>
    <property type="match status" value="1"/>
</dbReference>
<dbReference type="SFLD" id="SFLDS00014">
    <property type="entry name" value="RuBisCO"/>
    <property type="match status" value="1"/>
</dbReference>
<dbReference type="SFLD" id="SFLDG00301">
    <property type="entry name" value="RuBisCO-like_proteins"/>
    <property type="match status" value="1"/>
</dbReference>
<dbReference type="SUPFAM" id="SSF51649">
    <property type="entry name" value="RuBisCo, C-terminal domain"/>
    <property type="match status" value="1"/>
</dbReference>
<dbReference type="SUPFAM" id="SSF54966">
    <property type="entry name" value="RuBisCO, large subunit, small (N-terminal) domain"/>
    <property type="match status" value="1"/>
</dbReference>
<dbReference type="PROSITE" id="PS00157">
    <property type="entry name" value="RUBISCO_LARGE"/>
    <property type="match status" value="1"/>
</dbReference>
<keyword id="KW-0007">Acetylation</keyword>
<keyword id="KW-0113">Calvin cycle</keyword>
<keyword id="KW-0120">Carbon dioxide fixation</keyword>
<keyword id="KW-0150">Chloroplast</keyword>
<keyword id="KW-1015">Disulfide bond</keyword>
<keyword id="KW-0456">Lyase</keyword>
<keyword id="KW-0460">Magnesium</keyword>
<keyword id="KW-0479">Metal-binding</keyword>
<keyword id="KW-0488">Methylation</keyword>
<keyword id="KW-0503">Monooxygenase</keyword>
<keyword id="KW-0560">Oxidoreductase</keyword>
<keyword id="KW-0601">Photorespiration</keyword>
<keyword id="KW-0602">Photosynthesis</keyword>
<keyword id="KW-0934">Plastid</keyword>
<name>RBL_NICOT</name>
<comment type="function">
    <text evidence="1">RuBisCO catalyzes two reactions: the carboxylation of D-ribulose 1,5-bisphosphate, the primary event in carbon dioxide fixation, as well as the oxidative fragmentation of the pentose substrate in the photorespiration process. Both reactions occur simultaneously and in competition at the same active site.</text>
</comment>
<comment type="catalytic activity">
    <reaction evidence="1">
        <text>2 (2R)-3-phosphoglycerate + 2 H(+) = D-ribulose 1,5-bisphosphate + CO2 + H2O</text>
        <dbReference type="Rhea" id="RHEA:23124"/>
        <dbReference type="ChEBI" id="CHEBI:15377"/>
        <dbReference type="ChEBI" id="CHEBI:15378"/>
        <dbReference type="ChEBI" id="CHEBI:16526"/>
        <dbReference type="ChEBI" id="CHEBI:57870"/>
        <dbReference type="ChEBI" id="CHEBI:58272"/>
        <dbReference type="EC" id="4.1.1.39"/>
    </reaction>
</comment>
<comment type="catalytic activity">
    <reaction evidence="1">
        <text>D-ribulose 1,5-bisphosphate + O2 = 2-phosphoglycolate + (2R)-3-phosphoglycerate + 2 H(+)</text>
        <dbReference type="Rhea" id="RHEA:36631"/>
        <dbReference type="ChEBI" id="CHEBI:15378"/>
        <dbReference type="ChEBI" id="CHEBI:15379"/>
        <dbReference type="ChEBI" id="CHEBI:57870"/>
        <dbReference type="ChEBI" id="CHEBI:58033"/>
        <dbReference type="ChEBI" id="CHEBI:58272"/>
    </reaction>
</comment>
<comment type="cofactor">
    <cofactor evidence="1">
        <name>Mg(2+)</name>
        <dbReference type="ChEBI" id="CHEBI:18420"/>
    </cofactor>
    <text evidence="1">Binds 1 Mg(2+) ion per subunit.</text>
</comment>
<comment type="subunit">
    <text evidence="1">Heterohexadecamer of 8 large chains and 8 small chains; disulfide-linked. The disulfide link is formed within the large subunit homodimers.</text>
</comment>
<comment type="subcellular location">
    <subcellularLocation>
        <location>Plastid</location>
        <location>Chloroplast</location>
    </subcellularLocation>
</comment>
<comment type="PTM">
    <text evidence="1">The disulfide bond which can form in the large chain dimeric partners within the hexadecamer appears to be associated with oxidative stress and protein turnover.</text>
</comment>
<comment type="miscellaneous">
    <text evidence="1">The basic functional RuBisCO is composed of a large chain homodimer in a 'head-to-tail' conformation. In form I RuBisCO this homodimer is arranged in a barrel-like tetramer with the small subunits forming a tetrameric 'cap' on each end of the 'barrel'.</text>
</comment>
<comment type="similarity">
    <text evidence="1">Belongs to the RuBisCO large chain family. Type I subfamily.</text>
</comment>